<comment type="function">
    <text evidence="1">F(1)F(0) ATP synthase produces ATP from ADP in the presence of a proton or sodium gradient. F-type ATPases consist of two structural domains, F(1) containing the extramembraneous catalytic core and F(0) containing the membrane proton channel, linked together by a central stalk and a peripheral stalk. During catalysis, ATP synthesis in the catalytic domain of F(1) is coupled via a rotary mechanism of the central stalk subunits to proton translocation.</text>
</comment>
<comment type="function">
    <text evidence="1">Key component of the F(0) channel; it plays a direct role in translocation across the membrane. A homomeric c-ring of between 10-14 subunits forms the central stalk rotor element with the F(1) delta and epsilon subunits.</text>
</comment>
<comment type="subunit">
    <text evidence="1">F-type ATPases have 2 components, F(1) - the catalytic core - and F(0) - the membrane proton channel. F(1) has five subunits: alpha(3), beta(3), gamma(1), delta(1), epsilon(1). F(0) has four main subunits: a(1), b(1), b'(1) and c(10-14). The alpha and beta chains form an alternating ring which encloses part of the gamma chain. F(1) is attached to F(0) by a central stalk formed by the gamma and epsilon chains, while a peripheral stalk is formed by the delta, b and b' chains.</text>
</comment>
<comment type="subcellular location">
    <subcellularLocation>
        <location evidence="1">Plastid</location>
        <location evidence="1">Chloroplast thylakoid membrane</location>
        <topology evidence="1">Multi-pass membrane protein</topology>
    </subcellularLocation>
</comment>
<comment type="miscellaneous">
    <text>In plastids the F-type ATPase is also known as CF(1)CF(0).</text>
</comment>
<comment type="similarity">
    <text evidence="1">Belongs to the ATPase C chain family.</text>
</comment>
<protein>
    <recommendedName>
        <fullName evidence="1">ATP synthase subunit c, chloroplastic</fullName>
    </recommendedName>
    <alternativeName>
        <fullName evidence="1">ATP synthase F(0) sector subunit c</fullName>
    </alternativeName>
    <alternativeName>
        <fullName evidence="1">ATPase subunit III</fullName>
    </alternativeName>
    <alternativeName>
        <fullName evidence="1">F-type ATPase subunit c</fullName>
        <shortName evidence="1">F-ATPase subunit c</shortName>
    </alternativeName>
    <alternativeName>
        <fullName evidence="1">Lipid-binding protein</fullName>
    </alternativeName>
</protein>
<organism>
    <name type="scientific">Cycas taitungensis</name>
    <name type="common">Prince sago</name>
    <name type="synonym">Cycas taiwaniana</name>
    <dbReference type="NCBI Taxonomy" id="54799"/>
    <lineage>
        <taxon>Eukaryota</taxon>
        <taxon>Viridiplantae</taxon>
        <taxon>Streptophyta</taxon>
        <taxon>Embryophyta</taxon>
        <taxon>Tracheophyta</taxon>
        <taxon>Spermatophyta</taxon>
        <taxon>Cycadidae</taxon>
        <taxon>Cycadales</taxon>
        <taxon>Cycadaceae</taxon>
        <taxon>Cycas</taxon>
    </lineage>
</organism>
<geneLocation type="chloroplast"/>
<feature type="chain" id="PRO_0000362910" description="ATP synthase subunit c, chloroplastic">
    <location>
        <begin position="1"/>
        <end position="81"/>
    </location>
</feature>
<feature type="transmembrane region" description="Helical" evidence="1">
    <location>
        <begin position="3"/>
        <end position="23"/>
    </location>
</feature>
<feature type="transmembrane region" description="Helical" evidence="1">
    <location>
        <begin position="57"/>
        <end position="77"/>
    </location>
</feature>
<feature type="site" description="Reversibly protonated during proton transport" evidence="1">
    <location>
        <position position="61"/>
    </location>
</feature>
<reference key="1">
    <citation type="journal article" date="2007" name="Mol. Biol. Evol.">
        <title>Chloroplast genome (cpDNA) of Cycas taitungensis and 56 cp protein-coding genes of Gnetum parvifolium: insights into cpDNA evolution and phylogeny of extant seed plants.</title>
        <authorList>
            <person name="Wu C.-S."/>
            <person name="Wang Y.-N."/>
            <person name="Liu S.-M."/>
            <person name="Chaw S.-M."/>
        </authorList>
    </citation>
    <scope>NUCLEOTIDE SEQUENCE [LARGE SCALE GENOMIC DNA]</scope>
</reference>
<accession>A6H5F3</accession>
<sequence>MNPLIPAASVIAAGLAVGLASIGPGVGQGTAAGQAVEGIARQPEAEGKIRGTLLLSLAFMEALTIYGLVVALALLFANPFV</sequence>
<name>ATPH_CYCTA</name>
<gene>
    <name evidence="1" type="primary">atpH</name>
</gene>
<dbReference type="EMBL" id="AP009339">
    <property type="protein sequence ID" value="BAF64919.1"/>
    <property type="molecule type" value="Genomic_DNA"/>
</dbReference>
<dbReference type="RefSeq" id="YP_001312178.1">
    <property type="nucleotide sequence ID" value="NC_009618.1"/>
</dbReference>
<dbReference type="SMR" id="A6H5F3"/>
<dbReference type="GeneID" id="5309623"/>
<dbReference type="GO" id="GO:0009535">
    <property type="term" value="C:chloroplast thylakoid membrane"/>
    <property type="evidence" value="ECO:0007669"/>
    <property type="project" value="UniProtKB-SubCell"/>
</dbReference>
<dbReference type="GO" id="GO:0045259">
    <property type="term" value="C:proton-transporting ATP synthase complex"/>
    <property type="evidence" value="ECO:0007669"/>
    <property type="project" value="UniProtKB-KW"/>
</dbReference>
<dbReference type="GO" id="GO:0033177">
    <property type="term" value="C:proton-transporting two-sector ATPase complex, proton-transporting domain"/>
    <property type="evidence" value="ECO:0007669"/>
    <property type="project" value="InterPro"/>
</dbReference>
<dbReference type="GO" id="GO:0008289">
    <property type="term" value="F:lipid binding"/>
    <property type="evidence" value="ECO:0007669"/>
    <property type="project" value="UniProtKB-KW"/>
</dbReference>
<dbReference type="GO" id="GO:0046933">
    <property type="term" value="F:proton-transporting ATP synthase activity, rotational mechanism"/>
    <property type="evidence" value="ECO:0007669"/>
    <property type="project" value="UniProtKB-UniRule"/>
</dbReference>
<dbReference type="CDD" id="cd18183">
    <property type="entry name" value="ATP-synt_Fo_c_ATPH"/>
    <property type="match status" value="1"/>
</dbReference>
<dbReference type="FunFam" id="1.20.20.10:FF:000001">
    <property type="entry name" value="ATP synthase subunit c, chloroplastic"/>
    <property type="match status" value="1"/>
</dbReference>
<dbReference type="Gene3D" id="1.20.20.10">
    <property type="entry name" value="F1F0 ATP synthase subunit C"/>
    <property type="match status" value="1"/>
</dbReference>
<dbReference type="HAMAP" id="MF_01396">
    <property type="entry name" value="ATP_synth_c_bact"/>
    <property type="match status" value="1"/>
</dbReference>
<dbReference type="InterPro" id="IPR005953">
    <property type="entry name" value="ATP_synth_csu_bac/chlpt"/>
</dbReference>
<dbReference type="InterPro" id="IPR000454">
    <property type="entry name" value="ATP_synth_F0_csu"/>
</dbReference>
<dbReference type="InterPro" id="IPR020537">
    <property type="entry name" value="ATP_synth_F0_csu_DDCD_BS"/>
</dbReference>
<dbReference type="InterPro" id="IPR038662">
    <property type="entry name" value="ATP_synth_F0_csu_sf"/>
</dbReference>
<dbReference type="InterPro" id="IPR002379">
    <property type="entry name" value="ATPase_proteolipid_c-like_dom"/>
</dbReference>
<dbReference type="InterPro" id="IPR035921">
    <property type="entry name" value="F/V-ATP_Csub_sf"/>
</dbReference>
<dbReference type="NCBIfam" id="TIGR01260">
    <property type="entry name" value="ATP_synt_c"/>
    <property type="match status" value="1"/>
</dbReference>
<dbReference type="NCBIfam" id="NF005608">
    <property type="entry name" value="PRK07354.1"/>
    <property type="match status" value="1"/>
</dbReference>
<dbReference type="PANTHER" id="PTHR10031">
    <property type="entry name" value="ATP SYNTHASE LIPID-BINDING PROTEIN, MITOCHONDRIAL"/>
    <property type="match status" value="1"/>
</dbReference>
<dbReference type="PANTHER" id="PTHR10031:SF0">
    <property type="entry name" value="ATPASE PROTEIN 9"/>
    <property type="match status" value="1"/>
</dbReference>
<dbReference type="Pfam" id="PF00137">
    <property type="entry name" value="ATP-synt_C"/>
    <property type="match status" value="1"/>
</dbReference>
<dbReference type="PRINTS" id="PR00124">
    <property type="entry name" value="ATPASEC"/>
</dbReference>
<dbReference type="SUPFAM" id="SSF81333">
    <property type="entry name" value="F1F0 ATP synthase subunit C"/>
    <property type="match status" value="1"/>
</dbReference>
<dbReference type="PROSITE" id="PS00605">
    <property type="entry name" value="ATPASE_C"/>
    <property type="match status" value="1"/>
</dbReference>
<proteinExistence type="inferred from homology"/>
<evidence type="ECO:0000255" key="1">
    <source>
        <dbReference type="HAMAP-Rule" id="MF_01396"/>
    </source>
</evidence>
<keyword id="KW-0066">ATP synthesis</keyword>
<keyword id="KW-0138">CF(0)</keyword>
<keyword id="KW-0150">Chloroplast</keyword>
<keyword id="KW-0375">Hydrogen ion transport</keyword>
<keyword id="KW-0406">Ion transport</keyword>
<keyword id="KW-0446">Lipid-binding</keyword>
<keyword id="KW-0472">Membrane</keyword>
<keyword id="KW-0934">Plastid</keyword>
<keyword id="KW-0793">Thylakoid</keyword>
<keyword id="KW-0812">Transmembrane</keyword>
<keyword id="KW-1133">Transmembrane helix</keyword>
<keyword id="KW-0813">Transport</keyword>